<sequence>MKTKEIRSLSTDELLAKEKQYKEELFNLRFQQATGQLENTARLSQVRKNIARIKTILSEKELEQN</sequence>
<proteinExistence type="inferred from homology"/>
<name>RL29_LACDA</name>
<gene>
    <name evidence="1" type="primary">rpmC</name>
    <name type="ordered locus">Ldb0404</name>
</gene>
<evidence type="ECO:0000255" key="1">
    <source>
        <dbReference type="HAMAP-Rule" id="MF_00374"/>
    </source>
</evidence>
<evidence type="ECO:0000305" key="2"/>
<organism>
    <name type="scientific">Lactobacillus delbrueckii subsp. bulgaricus (strain ATCC 11842 / DSM 20081 / BCRC 10696 / JCM 1002 / NBRC 13953 / NCIMB 11778 / NCTC 12712 / WDCM 00102 / Lb 14)</name>
    <dbReference type="NCBI Taxonomy" id="390333"/>
    <lineage>
        <taxon>Bacteria</taxon>
        <taxon>Bacillati</taxon>
        <taxon>Bacillota</taxon>
        <taxon>Bacilli</taxon>
        <taxon>Lactobacillales</taxon>
        <taxon>Lactobacillaceae</taxon>
        <taxon>Lactobacillus</taxon>
    </lineage>
</organism>
<protein>
    <recommendedName>
        <fullName evidence="1">Large ribosomal subunit protein uL29</fullName>
    </recommendedName>
    <alternativeName>
        <fullName evidence="2">50S ribosomal protein L29</fullName>
    </alternativeName>
</protein>
<comment type="similarity">
    <text evidence="1">Belongs to the universal ribosomal protein uL29 family.</text>
</comment>
<keyword id="KW-1185">Reference proteome</keyword>
<keyword id="KW-0687">Ribonucleoprotein</keyword>
<keyword id="KW-0689">Ribosomal protein</keyword>
<reference key="1">
    <citation type="journal article" date="2006" name="Proc. Natl. Acad. Sci. U.S.A.">
        <title>The complete genome sequence of Lactobacillus bulgaricus reveals extensive and ongoing reductive evolution.</title>
        <authorList>
            <person name="van de Guchte M."/>
            <person name="Penaud S."/>
            <person name="Grimaldi C."/>
            <person name="Barbe V."/>
            <person name="Bryson K."/>
            <person name="Nicolas P."/>
            <person name="Robert C."/>
            <person name="Oztas S."/>
            <person name="Mangenot S."/>
            <person name="Couloux A."/>
            <person name="Loux V."/>
            <person name="Dervyn R."/>
            <person name="Bossy R."/>
            <person name="Bolotin A."/>
            <person name="Batto J.-M."/>
            <person name="Walunas T."/>
            <person name="Gibrat J.-F."/>
            <person name="Bessieres P."/>
            <person name="Weissenbach J."/>
            <person name="Ehrlich S.D."/>
            <person name="Maguin E."/>
        </authorList>
    </citation>
    <scope>NUCLEOTIDE SEQUENCE [LARGE SCALE GENOMIC DNA]</scope>
    <source>
        <strain>ATCC 11842 / DSM 20081 / BCRC 10696 / JCM 1002 / NBRC 13953 / NCIMB 11778 / NCTC 12712 / WDCM 00102 / Lb 14</strain>
    </source>
</reference>
<accession>Q1GBL0</accession>
<dbReference type="EMBL" id="CR954253">
    <property type="protein sequence ID" value="CAI97239.1"/>
    <property type="molecule type" value="Genomic_DNA"/>
</dbReference>
<dbReference type="RefSeq" id="WP_002878201.1">
    <property type="nucleotide sequence ID" value="NZ_JQAV01000001.1"/>
</dbReference>
<dbReference type="SMR" id="Q1GBL0"/>
<dbReference type="STRING" id="390333.Ldb0404"/>
<dbReference type="GeneID" id="69668434"/>
<dbReference type="KEGG" id="ldb:Ldb0404"/>
<dbReference type="PATRIC" id="fig|390333.13.peg.386"/>
<dbReference type="eggNOG" id="COG0255">
    <property type="taxonomic scope" value="Bacteria"/>
</dbReference>
<dbReference type="HOGENOM" id="CLU_158491_5_2_9"/>
<dbReference type="BioCyc" id="LDEL390333:LDB_RS01715-MONOMER"/>
<dbReference type="Proteomes" id="UP000001259">
    <property type="component" value="Chromosome"/>
</dbReference>
<dbReference type="GO" id="GO:0022625">
    <property type="term" value="C:cytosolic large ribosomal subunit"/>
    <property type="evidence" value="ECO:0007669"/>
    <property type="project" value="TreeGrafter"/>
</dbReference>
<dbReference type="GO" id="GO:0003735">
    <property type="term" value="F:structural constituent of ribosome"/>
    <property type="evidence" value="ECO:0007669"/>
    <property type="project" value="InterPro"/>
</dbReference>
<dbReference type="GO" id="GO:0006412">
    <property type="term" value="P:translation"/>
    <property type="evidence" value="ECO:0007669"/>
    <property type="project" value="UniProtKB-UniRule"/>
</dbReference>
<dbReference type="CDD" id="cd00427">
    <property type="entry name" value="Ribosomal_L29_HIP"/>
    <property type="match status" value="1"/>
</dbReference>
<dbReference type="FunFam" id="1.10.287.310:FF:000001">
    <property type="entry name" value="50S ribosomal protein L29"/>
    <property type="match status" value="1"/>
</dbReference>
<dbReference type="Gene3D" id="1.10.287.310">
    <property type="match status" value="1"/>
</dbReference>
<dbReference type="HAMAP" id="MF_00374">
    <property type="entry name" value="Ribosomal_uL29"/>
    <property type="match status" value="1"/>
</dbReference>
<dbReference type="InterPro" id="IPR050063">
    <property type="entry name" value="Ribosomal_protein_uL29"/>
</dbReference>
<dbReference type="InterPro" id="IPR001854">
    <property type="entry name" value="Ribosomal_uL29"/>
</dbReference>
<dbReference type="InterPro" id="IPR018254">
    <property type="entry name" value="Ribosomal_uL29_CS"/>
</dbReference>
<dbReference type="InterPro" id="IPR036049">
    <property type="entry name" value="Ribosomal_uL29_sf"/>
</dbReference>
<dbReference type="NCBIfam" id="TIGR00012">
    <property type="entry name" value="L29"/>
    <property type="match status" value="1"/>
</dbReference>
<dbReference type="PANTHER" id="PTHR10916">
    <property type="entry name" value="60S RIBOSOMAL PROTEIN L35/50S RIBOSOMAL PROTEIN L29"/>
    <property type="match status" value="1"/>
</dbReference>
<dbReference type="PANTHER" id="PTHR10916:SF0">
    <property type="entry name" value="LARGE RIBOSOMAL SUBUNIT PROTEIN UL29C"/>
    <property type="match status" value="1"/>
</dbReference>
<dbReference type="Pfam" id="PF00831">
    <property type="entry name" value="Ribosomal_L29"/>
    <property type="match status" value="1"/>
</dbReference>
<dbReference type="SUPFAM" id="SSF46561">
    <property type="entry name" value="Ribosomal protein L29 (L29p)"/>
    <property type="match status" value="1"/>
</dbReference>
<dbReference type="PROSITE" id="PS00579">
    <property type="entry name" value="RIBOSOMAL_L29"/>
    <property type="match status" value="1"/>
</dbReference>
<feature type="chain" id="PRO_1000007505" description="Large ribosomal subunit protein uL29">
    <location>
        <begin position="1"/>
        <end position="65"/>
    </location>
</feature>